<evidence type="ECO:0000250" key="1"/>
<evidence type="ECO:0000269" key="2">
    <source>
    </source>
</evidence>
<evidence type="ECO:0000269" key="3">
    <source>
    </source>
</evidence>
<evidence type="ECO:0000305" key="4"/>
<evidence type="ECO:0007829" key="5">
    <source>
        <dbReference type="PDB" id="6CN0"/>
    </source>
</evidence>
<evidence type="ECO:0007829" key="6">
    <source>
        <dbReference type="PDB" id="6PQB"/>
    </source>
</evidence>
<dbReference type="EC" id="2.1.1.179"/>
<dbReference type="EMBL" id="AB194779">
    <property type="protein sequence ID" value="BAE48305.1"/>
    <property type="molecule type" value="Genomic_DNA"/>
</dbReference>
<dbReference type="EMBL" id="EU144360">
    <property type="protein sequence ID" value="ABX39521.1"/>
    <property type="molecule type" value="Genomic_DNA"/>
</dbReference>
<dbReference type="RefSeq" id="WP_000855769.1">
    <property type="nucleotide sequence ID" value="NZ_CAXWZA010000017.1"/>
</dbReference>
<dbReference type="PDB" id="6CN0">
    <property type="method" value="X-ray"/>
    <property type="resolution" value="2.95 A"/>
    <property type="chains" value="A/B/C/D=1-281"/>
</dbReference>
<dbReference type="PDB" id="6PQB">
    <property type="method" value="X-ray"/>
    <property type="resolution" value="3.14 A"/>
    <property type="chains" value="A/B/C/D=1-281"/>
</dbReference>
<dbReference type="PDBsum" id="6CN0"/>
<dbReference type="PDBsum" id="6PQB"/>
<dbReference type="SMR" id="Q33DX5"/>
<dbReference type="CARD" id="ARO:3000861">
    <property type="molecule name" value="rmtC"/>
    <property type="mechanism identifier" value="ARO:0001001"/>
    <property type="mechanism name" value="antibiotic target alteration"/>
</dbReference>
<dbReference type="KEGG" id="ag:BAE48305"/>
<dbReference type="BRENDA" id="2.1.1.179">
    <property type="organism ID" value="5044"/>
</dbReference>
<dbReference type="GO" id="GO:0008649">
    <property type="term" value="F:rRNA methyltransferase activity"/>
    <property type="evidence" value="ECO:0007669"/>
    <property type="project" value="InterPro"/>
</dbReference>
<dbReference type="GO" id="GO:0046677">
    <property type="term" value="P:response to antibiotic"/>
    <property type="evidence" value="ECO:0007669"/>
    <property type="project" value="UniProtKB-KW"/>
</dbReference>
<dbReference type="Gene3D" id="1.10.8.10">
    <property type="entry name" value="DNA helicase RuvA subunit, C-terminal domain"/>
    <property type="match status" value="1"/>
</dbReference>
<dbReference type="Gene3D" id="3.40.50.150">
    <property type="entry name" value="Vaccinia Virus protein VP39"/>
    <property type="match status" value="1"/>
</dbReference>
<dbReference type="InterPro" id="IPR025981">
    <property type="entry name" value="rRNA_MeTrfase"/>
</dbReference>
<dbReference type="InterPro" id="IPR010769">
    <property type="entry name" value="rRNA_MeTrfase_GmN_bac"/>
</dbReference>
<dbReference type="InterPro" id="IPR029063">
    <property type="entry name" value="SAM-dependent_MTases_sf"/>
</dbReference>
<dbReference type="NCBIfam" id="NF000150">
    <property type="entry name" value="16S_rRNA_Rmt_C"/>
    <property type="match status" value="1"/>
</dbReference>
<dbReference type="NCBIfam" id="NF000466">
    <property type="entry name" value="16S_rRNA_Rmt_gen"/>
    <property type="match status" value="1"/>
</dbReference>
<dbReference type="Pfam" id="PF07091">
    <property type="entry name" value="FmrO"/>
    <property type="match status" value="1"/>
</dbReference>
<dbReference type="PIRSF" id="PIRSF015852">
    <property type="entry name" value="RRNA_mtase_Grm"/>
    <property type="match status" value="1"/>
</dbReference>
<dbReference type="SUPFAM" id="SSF53335">
    <property type="entry name" value="S-adenosyl-L-methionine-dependent methyltransferases"/>
    <property type="match status" value="1"/>
</dbReference>
<gene>
    <name type="primary">rmtC</name>
</gene>
<feature type="chain" id="PRO_0000416819" description="16S rRNA (guanine(1405)-N(7))-methyltransferase">
    <location>
        <begin position="1"/>
        <end position="281"/>
    </location>
</feature>
<feature type="binding site" evidence="1">
    <location>
        <position position="60"/>
    </location>
    <ligand>
        <name>S-adenosyl-L-methionine</name>
        <dbReference type="ChEBI" id="CHEBI:59789"/>
    </ligand>
</feature>
<feature type="binding site" evidence="1">
    <location>
        <begin position="105"/>
        <end position="107"/>
    </location>
    <ligand>
        <name>S-adenosyl-L-methionine</name>
        <dbReference type="ChEBI" id="CHEBI:59789"/>
    </ligand>
</feature>
<feature type="binding site" evidence="1">
    <location>
        <position position="111"/>
    </location>
    <ligand>
        <name>S-adenosyl-L-methionine</name>
        <dbReference type="ChEBI" id="CHEBI:59789"/>
    </ligand>
</feature>
<feature type="binding site" evidence="1">
    <location>
        <position position="136"/>
    </location>
    <ligand>
        <name>S-adenosyl-L-methionine</name>
        <dbReference type="ChEBI" id="CHEBI:59789"/>
    </ligand>
</feature>
<feature type="binding site" evidence="1">
    <location>
        <position position="160"/>
    </location>
    <ligand>
        <name>S-adenosyl-L-methionine</name>
        <dbReference type="ChEBI" id="CHEBI:59789"/>
    </ligand>
</feature>
<feature type="binding site" evidence="1">
    <location>
        <begin position="186"/>
        <end position="187"/>
    </location>
    <ligand>
        <name>S-adenosyl-L-methionine</name>
        <dbReference type="ChEBI" id="CHEBI:59789"/>
    </ligand>
</feature>
<feature type="binding site" evidence="1">
    <location>
        <position position="203"/>
    </location>
    <ligand>
        <name>S-adenosyl-L-methionine</name>
        <dbReference type="ChEBI" id="CHEBI:59789"/>
    </ligand>
</feature>
<feature type="binding site" evidence="1">
    <location>
        <position position="212"/>
    </location>
    <ligand>
        <name>S-adenosyl-L-methionine</name>
        <dbReference type="ChEBI" id="CHEBI:59789"/>
    </ligand>
</feature>
<feature type="helix" evidence="5">
    <location>
        <begin position="4"/>
        <end position="17"/>
    </location>
</feature>
<feature type="helix" evidence="6">
    <location>
        <begin position="19"/>
        <end position="21"/>
    </location>
</feature>
<feature type="helix" evidence="5">
    <location>
        <begin position="26"/>
        <end position="36"/>
    </location>
</feature>
<feature type="turn" evidence="5">
    <location>
        <begin position="37"/>
        <end position="39"/>
    </location>
</feature>
<feature type="helix" evidence="5">
    <location>
        <begin position="45"/>
        <end position="55"/>
    </location>
</feature>
<feature type="helix" evidence="5">
    <location>
        <begin position="58"/>
        <end position="61"/>
    </location>
</feature>
<feature type="helix" evidence="5">
    <location>
        <begin position="66"/>
        <end position="79"/>
    </location>
</feature>
<feature type="helix" evidence="5">
    <location>
        <begin position="87"/>
        <end position="102"/>
    </location>
</feature>
<feature type="helix" evidence="5">
    <location>
        <begin position="106"/>
        <end position="109"/>
    </location>
</feature>
<feature type="helix" evidence="5">
    <location>
        <begin position="110"/>
        <end position="113"/>
    </location>
</feature>
<feature type="helix" evidence="5">
    <location>
        <begin position="115"/>
        <end position="126"/>
    </location>
</feature>
<feature type="strand" evidence="5">
    <location>
        <begin position="130"/>
        <end position="135"/>
    </location>
</feature>
<feature type="helix" evidence="5">
    <location>
        <begin position="140"/>
        <end position="143"/>
    </location>
</feature>
<feature type="helix" evidence="5">
    <location>
        <begin position="144"/>
        <end position="149"/>
    </location>
</feature>
<feature type="strand" evidence="5">
    <location>
        <begin position="154"/>
        <end position="161"/>
    </location>
</feature>
<feature type="helix" evidence="5">
    <location>
        <begin position="163"/>
        <end position="175"/>
    </location>
</feature>
<feature type="strand" evidence="5">
    <location>
        <begin position="182"/>
        <end position="186"/>
    </location>
</feature>
<feature type="turn" evidence="5">
    <location>
        <begin position="189"/>
        <end position="191"/>
    </location>
</feature>
<feature type="strand" evidence="5">
    <location>
        <begin position="198"/>
        <end position="202"/>
    </location>
</feature>
<feature type="helix" evidence="5">
    <location>
        <begin position="206"/>
        <end position="212"/>
    </location>
</feature>
<feature type="helix" evidence="5">
    <location>
        <begin position="216"/>
        <end position="223"/>
    </location>
</feature>
<feature type="strand" evidence="5">
    <location>
        <begin position="227"/>
        <end position="234"/>
    </location>
</feature>
<feature type="strand" evidence="5">
    <location>
        <begin position="244"/>
        <end position="246"/>
    </location>
</feature>
<feature type="helix" evidence="5">
    <location>
        <begin position="249"/>
        <end position="259"/>
    </location>
</feature>
<feature type="strand" evidence="5">
    <location>
        <begin position="263"/>
        <end position="270"/>
    </location>
</feature>
<feature type="strand" evidence="5">
    <location>
        <begin position="273"/>
        <end position="279"/>
    </location>
</feature>
<name>RMTC_PROMI</name>
<keyword id="KW-0002">3D-structure</keyword>
<keyword id="KW-0046">Antibiotic resistance</keyword>
<keyword id="KW-0903">Direct protein sequencing</keyword>
<keyword id="KW-0489">Methyltransferase</keyword>
<keyword id="KW-0614">Plasmid</keyword>
<keyword id="KW-0698">rRNA processing</keyword>
<keyword id="KW-0949">S-adenosyl-L-methionine</keyword>
<keyword id="KW-0808">Transferase</keyword>
<protein>
    <recommendedName>
        <fullName>16S rRNA (guanine(1405)-N(7))-methyltransferase</fullName>
        <ecNumber>2.1.1.179</ecNumber>
    </recommendedName>
    <alternativeName>
        <fullName>16S rRNA m7G1405 methyltransferase</fullName>
    </alternativeName>
</protein>
<comment type="function">
    <text evidence="2 3">Specifically methylates the N(7) position of guanine 1405 in 16S rRNA. Confers resistance to various aminoglycosides, including gentamicin and kanamycin.</text>
</comment>
<comment type="catalytic activity">
    <reaction evidence="3">
        <text>guanosine(1405) in 16S rRNA + S-adenosyl-L-methionine = N(7)-methylguanosine(1405) in 16S rRNA + S-adenosyl-L-homocysteine</text>
        <dbReference type="Rhea" id="RHEA:42772"/>
        <dbReference type="Rhea" id="RHEA-COMP:10225"/>
        <dbReference type="Rhea" id="RHEA-COMP:10226"/>
        <dbReference type="ChEBI" id="CHEBI:57856"/>
        <dbReference type="ChEBI" id="CHEBI:59789"/>
        <dbReference type="ChEBI" id="CHEBI:74269"/>
        <dbReference type="ChEBI" id="CHEBI:74480"/>
        <dbReference type="EC" id="2.1.1.179"/>
    </reaction>
</comment>
<comment type="similarity">
    <text evidence="4">Belongs to the methyltransferase superfamily. Aminoglycoside resistance family.</text>
</comment>
<geneLocation type="plasmid">
    <name>pARS68</name>
</geneLocation>
<organism>
    <name type="scientific">Proteus mirabilis</name>
    <dbReference type="NCBI Taxonomy" id="584"/>
    <lineage>
        <taxon>Bacteria</taxon>
        <taxon>Pseudomonadati</taxon>
        <taxon>Pseudomonadota</taxon>
        <taxon>Gammaproteobacteria</taxon>
        <taxon>Enterobacterales</taxon>
        <taxon>Morganellaceae</taxon>
        <taxon>Proteus</taxon>
    </lineage>
</organism>
<reference key="1">
    <citation type="journal article" date="2006" name="Antimicrob. Agents Chemother.">
        <title>Novel plasmid-mediated 16S rRNA methylase, RmtC, found in a proteus mirabilis isolate demonstrating extraordinary high-level resistance against various aminoglycosides.</title>
        <authorList>
            <person name="Wachino J."/>
            <person name="Yamane K."/>
            <person name="Shibayama K."/>
            <person name="Kurokawa H."/>
            <person name="Shibata N."/>
            <person name="Suzuki S."/>
            <person name="Doi Y."/>
            <person name="Kimura K."/>
            <person name="Ike Y."/>
            <person name="Arakawa Y."/>
        </authorList>
    </citation>
    <scope>NUCLEOTIDE SEQUENCE [GENOMIC DNA]</scope>
    <scope>PROTEIN SEQUENCE OF 1-5</scope>
    <scope>FUNCTION IN ANTIBIOTIC RESISTANCE AND AS A METHYLTRANSFERASE</scope>
    <scope>GENE NAME</scope>
    <source>
        <strain>ARS68</strain>
        <plasmid>pARS68</plasmid>
    </source>
</reference>
<reference key="2">
    <citation type="journal article" date="2008" name="Antimicrob. Agents Chemother.">
        <title>RmtC 16S rRNA methyltransferase in Australia.</title>
        <authorList>
            <person name="Zong Z."/>
            <person name="Partridge S.R."/>
            <person name="Iredell J.R."/>
        </authorList>
    </citation>
    <scope>NUCLEOTIDE SEQUENCE [GENOMIC DNA]</scope>
    <source>
        <strain>JIE273</strain>
    </source>
</reference>
<reference key="3">
    <citation type="journal article" date="2010" name="FEMS Microbiol. Lett.">
        <title>RmtC introduces G1405 methylation in 16S rRNA and confers high-level aminoglycoside resistance on Gram-positive microorganisms.</title>
        <authorList>
            <person name="Wachino J."/>
            <person name="Shibayama K."/>
            <person name="Kimura K."/>
            <person name="Yamane K."/>
            <person name="Suzuki S."/>
            <person name="Arakawa Y."/>
        </authorList>
    </citation>
    <scope>FUNCTION</scope>
    <scope>CATALYTIC ACTIVITY</scope>
    <source>
        <strain>ARS68</strain>
        <plasmid>pARS68</plasmid>
    </source>
</reference>
<proteinExistence type="evidence at protein level"/>
<sequence length="281" mass="32106">MKTNDNYIEEVTAKVLTSGKYSTLYPPTVRRVTERLFDRYPPKQLEKEVRKKLHQAYGAYIGGIDGKRLEKKIEKIIHEIPNPTTDEATRTEWEKEICLKILNLHTSTNERTVAYDELYQKIFEVTGVPTSITDAGCALNPFSFPFFTEAGMLGQYIGFDLDKGMIEAIEHSLRTLNAPEGIVVKQGDILSDPSGESDLLLMFKLYTLLDRQEEASGLKILQEWKYKNAVISFPIKTISGRDVGMEENYTVKFENDLVGSDLRIMQKLKLGNEMYFIVSRL</sequence>
<accession>Q33DX5</accession>